<organism>
    <name type="scientific">Caenorhabditis briggsae</name>
    <dbReference type="NCBI Taxonomy" id="6238"/>
    <lineage>
        <taxon>Eukaryota</taxon>
        <taxon>Metazoa</taxon>
        <taxon>Ecdysozoa</taxon>
        <taxon>Nematoda</taxon>
        <taxon>Chromadorea</taxon>
        <taxon>Rhabditida</taxon>
        <taxon>Rhabditina</taxon>
        <taxon>Rhabditomorpha</taxon>
        <taxon>Rhabditoidea</taxon>
        <taxon>Rhabditidae</taxon>
        <taxon>Peloderinae</taxon>
        <taxon>Caenorhabditis</taxon>
    </lineage>
</organism>
<sequence length="639" mass="72283">MSIKLEDLHSFNEAVLFKGEEDEAPAPVLLLDKYRVRLVPITELPLVSNYSNTSQLGLNSEEVLVIDSPIESAEKQKTSSLLNRRENKKTIKSEKEDESMDMETAEGDKENTVSETGGGPLVTSFLTLDKLEKDGVNDVEIVGLDCEIQFFDANPIPFEDGISLQRFLRLESSKNFSAAVDKLPIWISTIGHHFPSVCWLAAGRTNKNVQVSGATRILGYFNENSQKLVKQLNEACGAAQVNRYRAVYDVIRKIATPTREAPGEVIIDMRWNTKSSLVLLEQPDNAADCTIKIDLGWGDNRFFIDETIFEQLFFVLNLADVLANPEKEVVFRSESDKFDDLVQEMKQLVEACSHEDNVFASNEKSEQVTDKVWNIVRKCSDVKQATMLFKNFLQALTYGKIKSHVQEGNKSHLASLIRASKTCDFRMPILERLSTIEMMMEIGVESLRGRIINKFSDTLQFPSDELTFILKTCENDLSTLEGTLHSSVVSLLPITMAMATIHQIFGFLNVKDLVVLPDLARRVLTKYTTGMVEKAKRGETETDYVFETTLPLLRMNKEAFMHKRPRIWTCENTNTVGANVQTRAMTTLELEPSLEHVCRLVNASRPVRPIDEDNRKPTEEERNADYTVSHTIFSYLPKL</sequence>
<name>ZWILC_CAEBR</name>
<reference key="1">
    <citation type="journal article" date="2003" name="PLoS Biol.">
        <title>The genome sequence of Caenorhabditis briggsae: a platform for comparative genomics.</title>
        <authorList>
            <person name="Stein L.D."/>
            <person name="Bao Z."/>
            <person name="Blasiar D."/>
            <person name="Blumenthal T."/>
            <person name="Brent M.R."/>
            <person name="Chen N."/>
            <person name="Chinwalla A."/>
            <person name="Clarke L."/>
            <person name="Clee C."/>
            <person name="Coghlan A."/>
            <person name="Coulson A."/>
            <person name="D'Eustachio P."/>
            <person name="Fitch D.H.A."/>
            <person name="Fulton L.A."/>
            <person name="Fulton R.E."/>
            <person name="Griffiths-Jones S."/>
            <person name="Harris T.W."/>
            <person name="Hillier L.W."/>
            <person name="Kamath R."/>
            <person name="Kuwabara P.E."/>
            <person name="Mardis E.R."/>
            <person name="Marra M.A."/>
            <person name="Miner T.L."/>
            <person name="Minx P."/>
            <person name="Mullikin J.C."/>
            <person name="Plumb R.W."/>
            <person name="Rogers J."/>
            <person name="Schein J.E."/>
            <person name="Sohrmann M."/>
            <person name="Spieth J."/>
            <person name="Stajich J.E."/>
            <person name="Wei C."/>
            <person name="Willey D."/>
            <person name="Wilson R.K."/>
            <person name="Durbin R.M."/>
            <person name="Waterston R.H."/>
        </authorList>
    </citation>
    <scope>NUCLEOTIDE SEQUENCE [LARGE SCALE GENOMIC DNA]</scope>
    <source>
        <strain>AF16</strain>
    </source>
</reference>
<proteinExistence type="inferred from homology"/>
<protein>
    <recommendedName>
        <fullName>Protein zwilch homolog</fullName>
    </recommendedName>
</protein>
<evidence type="ECO:0000250" key="1">
    <source>
        <dbReference type="UniProtKB" id="Q95XP9"/>
    </source>
</evidence>
<evidence type="ECO:0000256" key="2">
    <source>
        <dbReference type="SAM" id="MobiDB-lite"/>
    </source>
</evidence>
<evidence type="ECO:0000305" key="3"/>
<feature type="chain" id="PRO_0000314806" description="Protein zwilch homolog">
    <location>
        <begin position="1"/>
        <end position="639"/>
    </location>
</feature>
<feature type="region of interest" description="Disordered" evidence="2">
    <location>
        <begin position="76"/>
        <end position="116"/>
    </location>
</feature>
<feature type="compositionally biased region" description="Basic and acidic residues" evidence="2">
    <location>
        <begin position="76"/>
        <end position="95"/>
    </location>
</feature>
<feature type="compositionally biased region" description="Acidic residues" evidence="2">
    <location>
        <begin position="96"/>
        <end position="105"/>
    </location>
</feature>
<dbReference type="EMBL" id="HE600906">
    <property type="protein sequence ID" value="CAP24780.1"/>
    <property type="molecule type" value="Genomic_DNA"/>
</dbReference>
<dbReference type="FunCoup" id="P0C664">
    <property type="interactions" value="237"/>
</dbReference>
<dbReference type="STRING" id="6238.P0C664"/>
<dbReference type="EnsemblMetazoa" id="CBG03981.1">
    <property type="protein sequence ID" value="CBG03981.1"/>
    <property type="gene ID" value="WBGene00026734"/>
</dbReference>
<dbReference type="KEGG" id="cbr:CBG_03981"/>
<dbReference type="CTD" id="8581386"/>
<dbReference type="WormBase" id="CBG03981">
    <property type="protein sequence ID" value="CBP06615"/>
    <property type="gene ID" value="WBGene00026734"/>
    <property type="gene designation" value="Cbr-zwl-1"/>
</dbReference>
<dbReference type="eggNOG" id="KOG4803">
    <property type="taxonomic scope" value="Eukaryota"/>
</dbReference>
<dbReference type="HOGENOM" id="CLU_431650_0_0_1"/>
<dbReference type="InParanoid" id="P0C664"/>
<dbReference type="OMA" id="TDKVWNI"/>
<dbReference type="OrthoDB" id="5556307at2759"/>
<dbReference type="Proteomes" id="UP000008549">
    <property type="component" value="Unassembled WGS sequence"/>
</dbReference>
<dbReference type="GO" id="GO:0005938">
    <property type="term" value="C:cell cortex"/>
    <property type="evidence" value="ECO:0007669"/>
    <property type="project" value="UniProtKB-SubCell"/>
</dbReference>
<dbReference type="GO" id="GO:1990423">
    <property type="term" value="C:RZZ complex"/>
    <property type="evidence" value="ECO:0000318"/>
    <property type="project" value="GO_Central"/>
</dbReference>
<dbReference type="GO" id="GO:0005819">
    <property type="term" value="C:spindle"/>
    <property type="evidence" value="ECO:0007669"/>
    <property type="project" value="UniProtKB-SubCell"/>
</dbReference>
<dbReference type="GO" id="GO:0051301">
    <property type="term" value="P:cell division"/>
    <property type="evidence" value="ECO:0007669"/>
    <property type="project" value="UniProtKB-KW"/>
</dbReference>
<dbReference type="GO" id="GO:0051321">
    <property type="term" value="P:meiotic cell cycle"/>
    <property type="evidence" value="ECO:0007669"/>
    <property type="project" value="UniProtKB-KW"/>
</dbReference>
<dbReference type="GO" id="GO:0007094">
    <property type="term" value="P:mitotic spindle assembly checkpoint signaling"/>
    <property type="evidence" value="ECO:0000250"/>
    <property type="project" value="UniProtKB"/>
</dbReference>
<dbReference type="GO" id="GO:0010696">
    <property type="term" value="P:positive regulation of mitotic spindle pole body separation"/>
    <property type="evidence" value="ECO:0007669"/>
    <property type="project" value="EnsemblMetazoa"/>
</dbReference>
<dbReference type="GO" id="GO:1905342">
    <property type="term" value="P:positive regulation of protein localization to kinetochore"/>
    <property type="evidence" value="ECO:0007669"/>
    <property type="project" value="EnsemblMetazoa"/>
</dbReference>
<dbReference type="GO" id="GO:0034501">
    <property type="term" value="P:protein localization to kinetochore"/>
    <property type="evidence" value="ECO:0000318"/>
    <property type="project" value="GO_Central"/>
</dbReference>
<dbReference type="GO" id="GO:1903394">
    <property type="term" value="P:protein localization to kinetochore involved in kinetochore assembly"/>
    <property type="evidence" value="ECO:0007669"/>
    <property type="project" value="EnsemblMetazoa"/>
</dbReference>
<dbReference type="FunFam" id="1.10.287.1880:FF:000003">
    <property type="entry name" value="Protein zwilch homolog"/>
    <property type="match status" value="1"/>
</dbReference>
<dbReference type="Gene3D" id="1.10.287.1880">
    <property type="match status" value="1"/>
</dbReference>
<dbReference type="InterPro" id="IPR018630">
    <property type="entry name" value="Zwilch"/>
</dbReference>
<dbReference type="PANTHER" id="PTHR15995">
    <property type="entry name" value="PROTEIN ZWILCH HOMOLOG"/>
    <property type="match status" value="1"/>
</dbReference>
<dbReference type="PANTHER" id="PTHR15995:SF1">
    <property type="entry name" value="PROTEIN ZWILCH HOMOLOG"/>
    <property type="match status" value="1"/>
</dbReference>
<dbReference type="Pfam" id="PF09817">
    <property type="entry name" value="Zwilch"/>
    <property type="match status" value="1"/>
</dbReference>
<keyword id="KW-0131">Cell cycle</keyword>
<keyword id="KW-0132">Cell division</keyword>
<keyword id="KW-0137">Centromere</keyword>
<keyword id="KW-0158">Chromosome</keyword>
<keyword id="KW-0963">Cytoplasm</keyword>
<keyword id="KW-0206">Cytoskeleton</keyword>
<keyword id="KW-0217">Developmental protein</keyword>
<keyword id="KW-0995">Kinetochore</keyword>
<keyword id="KW-0469">Meiosis</keyword>
<keyword id="KW-0498">Mitosis</keyword>
<keyword id="KW-1185">Reference proteome</keyword>
<comment type="function">
    <text evidence="1">Essential component of the mitotic checkpoint, which prevents cells from prematurely exiting mitosis. Required for chromosome segregation, the assembly of the dynein-dynactin and mdf-1-mdf-2 complexes onto kinetochores and spindle pole separation. Its function related to the spindle assembly machinery and kinetochore-microtubule attachments likely depends on its association in the mitotic RZZ complex. The RZZ complex recruits the spindly-like protein spdl-1 to kinetochores. To prevent irregular chromosome segregation, the complex also inhibits the attachment of the kinetochore-associated NDC80 complex to microtubules. The recruitment of spdl-1 to kinetochores relieves this inhibition. Required for embryonic development.</text>
</comment>
<comment type="subunit">
    <text evidence="1">Component of the RZZ complex composed of rod-1, czw-1 and zwl-1. Interacts with the spindly-like protein spdl-1. Interacts with NDC80 complex component ndc-80.</text>
</comment>
<comment type="subcellular location">
    <subcellularLocation>
        <location evidence="1">Cytoplasm</location>
        <location evidence="1">Cell cortex</location>
    </subcellularLocation>
    <subcellularLocation>
        <location evidence="1">Chromosome</location>
        <location evidence="1">Centromere</location>
        <location evidence="1">Kinetochore</location>
    </subcellularLocation>
    <subcellularLocation>
        <location evidence="1">Cytoplasm</location>
        <location evidence="1">Cytoskeleton</location>
        <location evidence="1">Spindle</location>
    </subcellularLocation>
    <text evidence="1">Localizes to the kinetochore during nuclear envelope breakdown and remains there until the metaphase-anaphase transition. Localizes to kinetochores, spindle-associated rod-shaped structures and near the cell cortex in a knl-1-dependent manner in anaphase.</text>
</comment>
<comment type="similarity">
    <text evidence="3">Belongs to the ZWILCH family.</text>
</comment>
<accession>P0C664</accession>
<accession>A8WVW7</accession>
<gene>
    <name type="primary">zwl-1</name>
    <name type="ORF">CBG03981</name>
</gene>